<proteinExistence type="evidence at protein level"/>
<feature type="chain" id="PRO_0000416243" description="Zinc finger protein 587B">
    <location>
        <begin position="1"/>
        <end position="402"/>
    </location>
</feature>
<feature type="domain" description="KRAB" evidence="3">
    <location>
        <begin position="15"/>
        <end position="91"/>
    </location>
</feature>
<feature type="zinc finger region" description="C2H2-type 1" evidence="2">
    <location>
        <begin position="92"/>
        <end position="114"/>
    </location>
</feature>
<feature type="zinc finger region" description="C2H2-type 2; degenerate" evidence="2">
    <location>
        <begin position="120"/>
        <end position="142"/>
    </location>
</feature>
<feature type="zinc finger region" description="C2H2-type 3" evidence="2">
    <location>
        <begin position="242"/>
        <end position="264"/>
    </location>
</feature>
<feature type="zinc finger region" description="C2H2-type 4" evidence="2">
    <location>
        <begin position="270"/>
        <end position="292"/>
    </location>
</feature>
<feature type="zinc finger region" description="C2H2-type 5" evidence="2">
    <location>
        <begin position="298"/>
        <end position="320"/>
    </location>
</feature>
<feature type="zinc finger region" description="C2H2-type 6" evidence="2">
    <location>
        <begin position="326"/>
        <end position="348"/>
    </location>
</feature>
<feature type="zinc finger region" description="C2H2-type 7" evidence="2">
    <location>
        <begin position="354"/>
        <end position="383"/>
    </location>
</feature>
<feature type="cross-link" description="Glycyl lysine isopeptide (Lys-Gly) (interchain with G-Cter in SUMO2)" evidence="1">
    <location>
        <position position="177"/>
    </location>
</feature>
<feature type="cross-link" description="Glycyl lysine isopeptide (Lys-Gly) (interchain with G-Cter in SUMO2)" evidence="1">
    <location>
        <position position="200"/>
    </location>
</feature>
<feature type="cross-link" description="Glycyl lysine isopeptide (Lys-Gly) (interchain with G-Cter in SUMO2)" evidence="1">
    <location>
        <position position="253"/>
    </location>
</feature>
<feature type="cross-link" description="Glycyl lysine isopeptide (Lys-Gly) (interchain with G-Cter in SUMO2)" evidence="5">
    <location>
        <position position="366"/>
    </location>
</feature>
<feature type="sequence conflict" description="In Ref. 1; BAG61153." evidence="4" ref="1">
    <original>V</original>
    <variation>M</variation>
    <location>
        <position position="83"/>
    </location>
</feature>
<feature type="sequence conflict" description="In Ref. 1; BAG61153." evidence="4" ref="1">
    <original>K</original>
    <variation>G</variation>
    <location>
        <position position="390"/>
    </location>
</feature>
<feature type="sequence conflict" description="In Ref. 1; BAG61153." evidence="4" ref="1">
    <original>I</original>
    <variation>M</variation>
    <location>
        <position position="396"/>
    </location>
</feature>
<feature type="sequence conflict" description="In Ref. 1; BAG61153." evidence="4" ref="1">
    <original>K</original>
    <variation>R</variation>
    <location>
        <position position="398"/>
    </location>
</feature>
<comment type="function">
    <text evidence="4">May be involved in transcriptional regulation.</text>
</comment>
<comment type="subcellular location">
    <subcellularLocation>
        <location evidence="4">Nucleus</location>
    </subcellularLocation>
</comment>
<comment type="similarity">
    <text evidence="4">Belongs to the krueppel C2H2-type zinc-finger protein family.</text>
</comment>
<accession>E7ETH6</accession>
<accession>B4DR41</accession>
<organism>
    <name type="scientific">Homo sapiens</name>
    <name type="common">Human</name>
    <dbReference type="NCBI Taxonomy" id="9606"/>
    <lineage>
        <taxon>Eukaryota</taxon>
        <taxon>Metazoa</taxon>
        <taxon>Chordata</taxon>
        <taxon>Craniata</taxon>
        <taxon>Vertebrata</taxon>
        <taxon>Euteleostomi</taxon>
        <taxon>Mammalia</taxon>
        <taxon>Eutheria</taxon>
        <taxon>Euarchontoglires</taxon>
        <taxon>Primates</taxon>
        <taxon>Haplorrhini</taxon>
        <taxon>Catarrhini</taxon>
        <taxon>Hominidae</taxon>
        <taxon>Homo</taxon>
    </lineage>
</organism>
<evidence type="ECO:0000250" key="1">
    <source>
        <dbReference type="UniProtKB" id="Q9H707"/>
    </source>
</evidence>
<evidence type="ECO:0000255" key="2">
    <source>
        <dbReference type="PROSITE-ProRule" id="PRU00042"/>
    </source>
</evidence>
<evidence type="ECO:0000255" key="3">
    <source>
        <dbReference type="PROSITE-ProRule" id="PRU00119"/>
    </source>
</evidence>
<evidence type="ECO:0000305" key="4"/>
<evidence type="ECO:0007744" key="5">
    <source>
    </source>
</evidence>
<gene>
    <name type="primary">ZNF587B</name>
</gene>
<dbReference type="EMBL" id="AK299091">
    <property type="protein sequence ID" value="BAG61153.1"/>
    <property type="molecule type" value="mRNA"/>
</dbReference>
<dbReference type="EMBL" id="AC010522">
    <property type="status" value="NOT_ANNOTATED_CDS"/>
    <property type="molecule type" value="Genomic_DNA"/>
</dbReference>
<dbReference type="CCDS" id="CCDS56109.1"/>
<dbReference type="RefSeq" id="NP_001191747.1">
    <property type="nucleotide sequence ID" value="NM_001204818.2"/>
</dbReference>
<dbReference type="SMR" id="E7ETH6"/>
<dbReference type="BioGRID" id="945166">
    <property type="interactions" value="8"/>
</dbReference>
<dbReference type="FunCoup" id="E7ETH6">
    <property type="interactions" value="24"/>
</dbReference>
<dbReference type="IntAct" id="E7ETH6">
    <property type="interactions" value="4"/>
</dbReference>
<dbReference type="STRING" id="9606.ENSP00000392410"/>
<dbReference type="iPTMnet" id="E7ETH6"/>
<dbReference type="PhosphoSitePlus" id="E7ETH6"/>
<dbReference type="BioMuta" id="ZNF587B"/>
<dbReference type="jPOST" id="E7ETH6"/>
<dbReference type="MassIVE" id="E7ETH6"/>
<dbReference type="PaxDb" id="9606-ENSP00000392410"/>
<dbReference type="PeptideAtlas" id="E7ETH6"/>
<dbReference type="ProteomicsDB" id="18207"/>
<dbReference type="DNASU" id="100293516"/>
<dbReference type="Ensembl" id="ENST00000442832.8">
    <property type="protein sequence ID" value="ENSP00000392410.2"/>
    <property type="gene ID" value="ENSG00000269343.9"/>
</dbReference>
<dbReference type="GeneID" id="100293516"/>
<dbReference type="KEGG" id="hsa:100293516"/>
<dbReference type="UCSC" id="uc021vcp.2">
    <property type="organism name" value="human"/>
</dbReference>
<dbReference type="AGR" id="HGNC:37142"/>
<dbReference type="CTD" id="100293516"/>
<dbReference type="DisGeNET" id="100293516"/>
<dbReference type="GeneCards" id="ZNF587B"/>
<dbReference type="HGNC" id="HGNC:37142">
    <property type="gene designation" value="ZNF587B"/>
</dbReference>
<dbReference type="HPA" id="ENSG00000269343">
    <property type="expression patterns" value="Low tissue specificity"/>
</dbReference>
<dbReference type="neXtProt" id="NX_E7ETH6"/>
<dbReference type="OpenTargets" id="ENSG00000269343"/>
<dbReference type="VEuPathDB" id="HostDB:ENSG00000269343"/>
<dbReference type="eggNOG" id="KOG1721">
    <property type="taxonomic scope" value="Eukaryota"/>
</dbReference>
<dbReference type="GeneTree" id="ENSGT00940000164660"/>
<dbReference type="InParanoid" id="E7ETH6"/>
<dbReference type="OrthoDB" id="1095242at2759"/>
<dbReference type="PAN-GO" id="E7ETH6">
    <property type="GO annotations" value="3 GO annotations based on evolutionary models"/>
</dbReference>
<dbReference type="PathwayCommons" id="E7ETH6"/>
<dbReference type="BioGRID-ORCS" id="100293516">
    <property type="hits" value="11 hits in 1148 CRISPR screens"/>
</dbReference>
<dbReference type="ChiTaRS" id="ZNF587B">
    <property type="organism name" value="human"/>
</dbReference>
<dbReference type="GenomeRNAi" id="100293516"/>
<dbReference type="Pharos" id="E7ETH6">
    <property type="development level" value="Tdark"/>
</dbReference>
<dbReference type="PRO" id="PR:E7ETH6"/>
<dbReference type="Proteomes" id="UP000005640">
    <property type="component" value="Chromosome 19"/>
</dbReference>
<dbReference type="RNAct" id="E7ETH6">
    <property type="molecule type" value="protein"/>
</dbReference>
<dbReference type="Bgee" id="ENSG00000269343">
    <property type="expression patterns" value="Expressed in secondary oocyte and 186 other cell types or tissues"/>
</dbReference>
<dbReference type="ExpressionAtlas" id="E7ETH6">
    <property type="expression patterns" value="baseline and differential"/>
</dbReference>
<dbReference type="GO" id="GO:0005634">
    <property type="term" value="C:nucleus"/>
    <property type="evidence" value="ECO:0000318"/>
    <property type="project" value="GO_Central"/>
</dbReference>
<dbReference type="GO" id="GO:0000981">
    <property type="term" value="F:DNA-binding transcription factor activity, RNA polymerase II-specific"/>
    <property type="evidence" value="ECO:0000318"/>
    <property type="project" value="GO_Central"/>
</dbReference>
<dbReference type="GO" id="GO:0000977">
    <property type="term" value="F:RNA polymerase II transcription regulatory region sequence-specific DNA binding"/>
    <property type="evidence" value="ECO:0000318"/>
    <property type="project" value="GO_Central"/>
</dbReference>
<dbReference type="GO" id="GO:0008270">
    <property type="term" value="F:zinc ion binding"/>
    <property type="evidence" value="ECO:0007669"/>
    <property type="project" value="UniProtKB-KW"/>
</dbReference>
<dbReference type="GO" id="GO:0006357">
    <property type="term" value="P:regulation of transcription by RNA polymerase II"/>
    <property type="evidence" value="ECO:0000318"/>
    <property type="project" value="GO_Central"/>
</dbReference>
<dbReference type="CDD" id="cd07765">
    <property type="entry name" value="KRAB_A-box"/>
    <property type="match status" value="1"/>
</dbReference>
<dbReference type="FunFam" id="3.30.160.60:FF:004090">
    <property type="match status" value="1"/>
</dbReference>
<dbReference type="FunFam" id="3.30.160.60:FF:000249">
    <property type="entry name" value="Zinc finger protein 154"/>
    <property type="match status" value="1"/>
</dbReference>
<dbReference type="FunFam" id="3.30.160.60:FF:002343">
    <property type="entry name" value="Zinc finger protein 33A"/>
    <property type="match status" value="1"/>
</dbReference>
<dbReference type="FunFam" id="3.30.160.60:FF:001498">
    <property type="entry name" value="Zinc finger protein 404"/>
    <property type="match status" value="1"/>
</dbReference>
<dbReference type="FunFam" id="3.30.160.60:FF:002967">
    <property type="entry name" value="Zinc finger protein 417"/>
    <property type="match status" value="1"/>
</dbReference>
<dbReference type="FunFam" id="3.30.160.60:FF:000490">
    <property type="entry name" value="Zinc finger protein 605"/>
    <property type="match status" value="1"/>
</dbReference>
<dbReference type="Gene3D" id="6.10.140.140">
    <property type="match status" value="1"/>
</dbReference>
<dbReference type="Gene3D" id="3.30.160.60">
    <property type="entry name" value="Classic Zinc Finger"/>
    <property type="match status" value="6"/>
</dbReference>
<dbReference type="InterPro" id="IPR001909">
    <property type="entry name" value="KRAB"/>
</dbReference>
<dbReference type="InterPro" id="IPR036051">
    <property type="entry name" value="KRAB_dom_sf"/>
</dbReference>
<dbReference type="InterPro" id="IPR036236">
    <property type="entry name" value="Znf_C2H2_sf"/>
</dbReference>
<dbReference type="InterPro" id="IPR013087">
    <property type="entry name" value="Znf_C2H2_type"/>
</dbReference>
<dbReference type="PANTHER" id="PTHR24381">
    <property type="entry name" value="ZINC FINGER PROTEIN"/>
    <property type="match status" value="1"/>
</dbReference>
<dbReference type="PANTHER" id="PTHR24381:SF304">
    <property type="entry name" value="ZINC FINGER PROTEIN 587B"/>
    <property type="match status" value="1"/>
</dbReference>
<dbReference type="Pfam" id="PF01352">
    <property type="entry name" value="KRAB"/>
    <property type="match status" value="1"/>
</dbReference>
<dbReference type="Pfam" id="PF00096">
    <property type="entry name" value="zf-C2H2"/>
    <property type="match status" value="5"/>
</dbReference>
<dbReference type="SMART" id="SM00349">
    <property type="entry name" value="KRAB"/>
    <property type="match status" value="1"/>
</dbReference>
<dbReference type="SMART" id="SM00355">
    <property type="entry name" value="ZnF_C2H2"/>
    <property type="match status" value="6"/>
</dbReference>
<dbReference type="SUPFAM" id="SSF57667">
    <property type="entry name" value="beta-beta-alpha zinc fingers"/>
    <property type="match status" value="4"/>
</dbReference>
<dbReference type="SUPFAM" id="SSF109640">
    <property type="entry name" value="KRAB domain (Kruppel-associated box)"/>
    <property type="match status" value="1"/>
</dbReference>
<dbReference type="PROSITE" id="PS50805">
    <property type="entry name" value="KRAB"/>
    <property type="match status" value="1"/>
</dbReference>
<dbReference type="PROSITE" id="PS00028">
    <property type="entry name" value="ZINC_FINGER_C2H2_1"/>
    <property type="match status" value="5"/>
</dbReference>
<dbReference type="PROSITE" id="PS50157">
    <property type="entry name" value="ZINC_FINGER_C2H2_2"/>
    <property type="match status" value="6"/>
</dbReference>
<keyword id="KW-1017">Isopeptide bond</keyword>
<keyword id="KW-0479">Metal-binding</keyword>
<keyword id="KW-0539">Nucleus</keyword>
<keyword id="KW-1267">Proteomics identification</keyword>
<keyword id="KW-1185">Reference proteome</keyword>
<keyword id="KW-0677">Repeat</keyword>
<keyword id="KW-0832">Ubl conjugation</keyword>
<keyword id="KW-0862">Zinc</keyword>
<keyword id="KW-0863">Zinc-finger</keyword>
<name>Z587B_HUMAN</name>
<reference key="1">
    <citation type="journal article" date="2004" name="Nat. Genet.">
        <title>Complete sequencing and characterization of 21,243 full-length human cDNAs.</title>
        <authorList>
            <person name="Ota T."/>
            <person name="Suzuki Y."/>
            <person name="Nishikawa T."/>
            <person name="Otsuki T."/>
            <person name="Sugiyama T."/>
            <person name="Irie R."/>
            <person name="Wakamatsu A."/>
            <person name="Hayashi K."/>
            <person name="Sato H."/>
            <person name="Nagai K."/>
            <person name="Kimura K."/>
            <person name="Makita H."/>
            <person name="Sekine M."/>
            <person name="Obayashi M."/>
            <person name="Nishi T."/>
            <person name="Shibahara T."/>
            <person name="Tanaka T."/>
            <person name="Ishii S."/>
            <person name="Yamamoto J."/>
            <person name="Saito K."/>
            <person name="Kawai Y."/>
            <person name="Isono Y."/>
            <person name="Nakamura Y."/>
            <person name="Nagahari K."/>
            <person name="Murakami K."/>
            <person name="Yasuda T."/>
            <person name="Iwayanagi T."/>
            <person name="Wagatsuma M."/>
            <person name="Shiratori A."/>
            <person name="Sudo H."/>
            <person name="Hosoiri T."/>
            <person name="Kaku Y."/>
            <person name="Kodaira H."/>
            <person name="Kondo H."/>
            <person name="Sugawara M."/>
            <person name="Takahashi M."/>
            <person name="Kanda K."/>
            <person name="Yokoi T."/>
            <person name="Furuya T."/>
            <person name="Kikkawa E."/>
            <person name="Omura Y."/>
            <person name="Abe K."/>
            <person name="Kamihara K."/>
            <person name="Katsuta N."/>
            <person name="Sato K."/>
            <person name="Tanikawa M."/>
            <person name="Yamazaki M."/>
            <person name="Ninomiya K."/>
            <person name="Ishibashi T."/>
            <person name="Yamashita H."/>
            <person name="Murakawa K."/>
            <person name="Fujimori K."/>
            <person name="Tanai H."/>
            <person name="Kimata M."/>
            <person name="Watanabe M."/>
            <person name="Hiraoka S."/>
            <person name="Chiba Y."/>
            <person name="Ishida S."/>
            <person name="Ono Y."/>
            <person name="Takiguchi S."/>
            <person name="Watanabe S."/>
            <person name="Yosida M."/>
            <person name="Hotuta T."/>
            <person name="Kusano J."/>
            <person name="Kanehori K."/>
            <person name="Takahashi-Fujii A."/>
            <person name="Hara H."/>
            <person name="Tanase T.-O."/>
            <person name="Nomura Y."/>
            <person name="Togiya S."/>
            <person name="Komai F."/>
            <person name="Hara R."/>
            <person name="Takeuchi K."/>
            <person name="Arita M."/>
            <person name="Imose N."/>
            <person name="Musashino K."/>
            <person name="Yuuki H."/>
            <person name="Oshima A."/>
            <person name="Sasaki N."/>
            <person name="Aotsuka S."/>
            <person name="Yoshikawa Y."/>
            <person name="Matsunawa H."/>
            <person name="Ichihara T."/>
            <person name="Shiohata N."/>
            <person name="Sano S."/>
            <person name="Moriya S."/>
            <person name="Momiyama H."/>
            <person name="Satoh N."/>
            <person name="Takami S."/>
            <person name="Terashima Y."/>
            <person name="Suzuki O."/>
            <person name="Nakagawa S."/>
            <person name="Senoh A."/>
            <person name="Mizoguchi H."/>
            <person name="Goto Y."/>
            <person name="Shimizu F."/>
            <person name="Wakebe H."/>
            <person name="Hishigaki H."/>
            <person name="Watanabe T."/>
            <person name="Sugiyama A."/>
            <person name="Takemoto M."/>
            <person name="Kawakami B."/>
            <person name="Yamazaki M."/>
            <person name="Watanabe K."/>
            <person name="Kumagai A."/>
            <person name="Itakura S."/>
            <person name="Fukuzumi Y."/>
            <person name="Fujimori Y."/>
            <person name="Komiyama M."/>
            <person name="Tashiro H."/>
            <person name="Tanigami A."/>
            <person name="Fujiwara T."/>
            <person name="Ono T."/>
            <person name="Yamada K."/>
            <person name="Fujii Y."/>
            <person name="Ozaki K."/>
            <person name="Hirao M."/>
            <person name="Ohmori Y."/>
            <person name="Kawabata A."/>
            <person name="Hikiji T."/>
            <person name="Kobatake N."/>
            <person name="Inagaki H."/>
            <person name="Ikema Y."/>
            <person name="Okamoto S."/>
            <person name="Okitani R."/>
            <person name="Kawakami T."/>
            <person name="Noguchi S."/>
            <person name="Itoh T."/>
            <person name="Shigeta K."/>
            <person name="Senba T."/>
            <person name="Matsumura K."/>
            <person name="Nakajima Y."/>
            <person name="Mizuno T."/>
            <person name="Morinaga M."/>
            <person name="Sasaki M."/>
            <person name="Togashi T."/>
            <person name="Oyama M."/>
            <person name="Hata H."/>
            <person name="Watanabe M."/>
            <person name="Komatsu T."/>
            <person name="Mizushima-Sugano J."/>
            <person name="Satoh T."/>
            <person name="Shirai Y."/>
            <person name="Takahashi Y."/>
            <person name="Nakagawa K."/>
            <person name="Okumura K."/>
            <person name="Nagase T."/>
            <person name="Nomura N."/>
            <person name="Kikuchi H."/>
            <person name="Masuho Y."/>
            <person name="Yamashita R."/>
            <person name="Nakai K."/>
            <person name="Yada T."/>
            <person name="Nakamura Y."/>
            <person name="Ohara O."/>
            <person name="Isogai T."/>
            <person name="Sugano S."/>
        </authorList>
    </citation>
    <scope>NUCLEOTIDE SEQUENCE [LARGE SCALE MRNA]</scope>
    <source>
        <tissue>Teratocarcinoma</tissue>
    </source>
</reference>
<reference key="2">
    <citation type="journal article" date="2004" name="Nature">
        <title>The DNA sequence and biology of human chromosome 19.</title>
        <authorList>
            <person name="Grimwood J."/>
            <person name="Gordon L.A."/>
            <person name="Olsen A.S."/>
            <person name="Terry A."/>
            <person name="Schmutz J."/>
            <person name="Lamerdin J.E."/>
            <person name="Hellsten U."/>
            <person name="Goodstein D."/>
            <person name="Couronne O."/>
            <person name="Tran-Gyamfi M."/>
            <person name="Aerts A."/>
            <person name="Altherr M."/>
            <person name="Ashworth L."/>
            <person name="Bajorek E."/>
            <person name="Black S."/>
            <person name="Branscomb E."/>
            <person name="Caenepeel S."/>
            <person name="Carrano A.V."/>
            <person name="Caoile C."/>
            <person name="Chan Y.M."/>
            <person name="Christensen M."/>
            <person name="Cleland C.A."/>
            <person name="Copeland A."/>
            <person name="Dalin E."/>
            <person name="Dehal P."/>
            <person name="Denys M."/>
            <person name="Detter J.C."/>
            <person name="Escobar J."/>
            <person name="Flowers D."/>
            <person name="Fotopulos D."/>
            <person name="Garcia C."/>
            <person name="Georgescu A.M."/>
            <person name="Glavina T."/>
            <person name="Gomez M."/>
            <person name="Gonzales E."/>
            <person name="Groza M."/>
            <person name="Hammon N."/>
            <person name="Hawkins T."/>
            <person name="Haydu L."/>
            <person name="Ho I."/>
            <person name="Huang W."/>
            <person name="Israni S."/>
            <person name="Jett J."/>
            <person name="Kadner K."/>
            <person name="Kimball H."/>
            <person name="Kobayashi A."/>
            <person name="Larionov V."/>
            <person name="Leem S.-H."/>
            <person name="Lopez F."/>
            <person name="Lou Y."/>
            <person name="Lowry S."/>
            <person name="Malfatti S."/>
            <person name="Martinez D."/>
            <person name="McCready P.M."/>
            <person name="Medina C."/>
            <person name="Morgan J."/>
            <person name="Nelson K."/>
            <person name="Nolan M."/>
            <person name="Ovcharenko I."/>
            <person name="Pitluck S."/>
            <person name="Pollard M."/>
            <person name="Popkie A.P."/>
            <person name="Predki P."/>
            <person name="Quan G."/>
            <person name="Ramirez L."/>
            <person name="Rash S."/>
            <person name="Retterer J."/>
            <person name="Rodriguez A."/>
            <person name="Rogers S."/>
            <person name="Salamov A."/>
            <person name="Salazar A."/>
            <person name="She X."/>
            <person name="Smith D."/>
            <person name="Slezak T."/>
            <person name="Solovyev V."/>
            <person name="Thayer N."/>
            <person name="Tice H."/>
            <person name="Tsai M."/>
            <person name="Ustaszewska A."/>
            <person name="Vo N."/>
            <person name="Wagner M."/>
            <person name="Wheeler J."/>
            <person name="Wu K."/>
            <person name="Xie G."/>
            <person name="Yang J."/>
            <person name="Dubchak I."/>
            <person name="Furey T.S."/>
            <person name="DeJong P."/>
            <person name="Dickson M."/>
            <person name="Gordon D."/>
            <person name="Eichler E.E."/>
            <person name="Pennacchio L.A."/>
            <person name="Richardson P."/>
            <person name="Stubbs L."/>
            <person name="Rokhsar D.S."/>
            <person name="Myers R.M."/>
            <person name="Rubin E.M."/>
            <person name="Lucas S.M."/>
        </authorList>
    </citation>
    <scope>NUCLEOTIDE SEQUENCE [LARGE SCALE GENOMIC DNA]</scope>
</reference>
<reference key="3">
    <citation type="journal article" date="2014" name="Nat. Struct. Mol. Biol.">
        <title>Uncovering global SUMOylation signaling networks in a site-specific manner.</title>
        <authorList>
            <person name="Hendriks I.A."/>
            <person name="D'Souza R.C."/>
            <person name="Yang B."/>
            <person name="Verlaan-de Vries M."/>
            <person name="Mann M."/>
            <person name="Vertegaal A.C."/>
        </authorList>
    </citation>
    <scope>SUMOYLATION [LARGE SCALE ANALYSIS] AT LYS-366</scope>
    <scope>IDENTIFICATION BY MASS SPECTROMETRY [LARGE SCALE ANALYSIS]</scope>
</reference>
<protein>
    <recommendedName>
        <fullName>Zinc finger protein 587B</fullName>
    </recommendedName>
</protein>
<sequence>MAVVATLRLSAQGTVTFEDVAVKFTQEEWNLLSEAQRCLYRDVTLENLALMSSLGCWCGVEDEAAPSKQSIYIQRETQVRTPVTGVSPKKAHPCEMCGPILGDILHVADHQGTHHKQKLHRCEAWGNKLYDSGNFHQHQNEHIGEKPYRGSVEEALFVKRCKLHVSGESSVFSESGKDFLPRSGLLQQEASHTGEKSNSKTECVSPFQCGGAHYSHGDSMKHFSTKHILSQHQRLLPREECYVCCECGKSFSKYVSFSNHQRVHSGKRPYECGECEKSFSQKSSLIQHQQFHTGGKPYGCEECGKYFSLEGYLRRHQKVHAGKGPYECGECGKSFSSNVNLKSHQRIHTGERPYKCGECEKSFSRKPSLSYHQRFGRPRWVDHKDRKEFKTSLGNIVKSCLF</sequence>